<evidence type="ECO:0000250" key="1"/>
<evidence type="ECO:0000255" key="2">
    <source>
        <dbReference type="PROSITE-ProRule" id="PRU00589"/>
    </source>
</evidence>
<evidence type="ECO:0000255" key="3">
    <source>
        <dbReference type="PROSITE-ProRule" id="PRU00590"/>
    </source>
</evidence>
<evidence type="ECO:0000255" key="4">
    <source>
        <dbReference type="PROSITE-ProRule" id="PRU10044"/>
    </source>
</evidence>
<evidence type="ECO:0000256" key="5">
    <source>
        <dbReference type="SAM" id="MobiDB-lite"/>
    </source>
</evidence>
<evidence type="ECO:0000269" key="6">
    <source>
    </source>
</evidence>
<keyword id="KW-0378">Hydrolase</keyword>
<keyword id="KW-0904">Protein phosphatase</keyword>
<keyword id="KW-1185">Reference proteome</keyword>
<name>CNRN_DICDI</name>
<comment type="function">
    <text evidence="6">Protein phosphatase that negatively regulates PI3K-dependent pathways. Regulates cAMP signal transduction to control territory size. During development, a lawn of Dictyostelium cells breaks up into territories where cells aggregate in dendritic streams to form groups of 20'000 cells.</text>
</comment>
<comment type="catalytic activity">
    <reaction evidence="6">
        <text>a 1,2-diacyl-sn-glycero-3-phospho-(1D-myo-inositol-3,4,5-trisphosphate) + H2O = a 1,2-diacyl-sn-glycero-3-phospho-(1D-myo-inositol-4,5-bisphosphate) + phosphate</text>
        <dbReference type="Rhea" id="RHEA:25017"/>
        <dbReference type="ChEBI" id="CHEBI:15377"/>
        <dbReference type="ChEBI" id="CHEBI:43474"/>
        <dbReference type="ChEBI" id="CHEBI:57836"/>
        <dbReference type="ChEBI" id="CHEBI:58456"/>
        <dbReference type="EC" id="3.1.3.67"/>
    </reaction>
</comment>
<comment type="cofactor">
    <cofactor evidence="1">
        <name>Mg(2+)</name>
        <dbReference type="ChEBI" id="CHEBI:18420"/>
    </cofactor>
</comment>
<comment type="developmental stage">
    <text evidence="6">Level is low in vegetative cells, increases after starvation, peaks between 5 and 10 hours, and then decreases. Aggregation territories and streams form after 5 to 8 hours of starvation. This pattern of accumulation indicates that cnrN mRNA is present when aggregation territories and streams are forming.</text>
</comment>
<comment type="disruption phenotype">
    <text evidence="6">Cells lacking cnrN form abnormally small groups, which can be rescued by the expression of exogenous cnrN. They also overaccumulate cAMP during development and form abnormally small fruiting bodies. Five seconds after cAMP stimulation, a prolonged and higher peak of phosphatidylinositol (3,4,5)-trisphosphate is shown compared to wild type cells.</text>
</comment>
<accession>Q54JL7</accession>
<protein>
    <recommendedName>
        <fullName>Phosphatidylinositol 3,4,5-trisphosphate 3-phosphatase cnrN</fullName>
        <ecNumber>3.1.3.67</ecNumber>
    </recommendedName>
</protein>
<proteinExistence type="evidence at protein level"/>
<feature type="chain" id="PRO_0000363860" description="Phosphatidylinositol 3,4,5-trisphosphate 3-phosphatase cnrN">
    <location>
        <begin position="1"/>
        <end position="639"/>
    </location>
</feature>
<feature type="domain" description="Phosphatase tensin-type" evidence="3">
    <location>
        <begin position="20"/>
        <end position="190"/>
    </location>
</feature>
<feature type="domain" description="C2 tensin-type" evidence="2">
    <location>
        <begin position="195"/>
        <end position="350"/>
    </location>
</feature>
<feature type="region of interest" description="Disordered" evidence="5">
    <location>
        <begin position="243"/>
        <end position="265"/>
    </location>
</feature>
<feature type="region of interest" description="Disordered" evidence="5">
    <location>
        <begin position="395"/>
        <end position="429"/>
    </location>
</feature>
<feature type="region of interest" description="Disordered" evidence="5">
    <location>
        <begin position="451"/>
        <end position="498"/>
    </location>
</feature>
<feature type="region of interest" description="Disordered" evidence="5">
    <location>
        <begin position="519"/>
        <end position="567"/>
    </location>
</feature>
<feature type="region of interest" description="Disordered" evidence="5">
    <location>
        <begin position="598"/>
        <end position="628"/>
    </location>
</feature>
<feature type="compositionally biased region" description="Low complexity" evidence="5">
    <location>
        <begin position="244"/>
        <end position="265"/>
    </location>
</feature>
<feature type="compositionally biased region" description="Low complexity" evidence="5">
    <location>
        <begin position="395"/>
        <end position="424"/>
    </location>
</feature>
<feature type="compositionally biased region" description="Low complexity" evidence="5">
    <location>
        <begin position="458"/>
        <end position="486"/>
    </location>
</feature>
<feature type="compositionally biased region" description="Low complexity" evidence="5">
    <location>
        <begin position="519"/>
        <end position="554"/>
    </location>
</feature>
<feature type="compositionally biased region" description="Polar residues" evidence="5">
    <location>
        <begin position="598"/>
        <end position="608"/>
    </location>
</feature>
<feature type="compositionally biased region" description="Basic and acidic residues" evidence="5">
    <location>
        <begin position="619"/>
        <end position="628"/>
    </location>
</feature>
<feature type="active site" description="Phosphocysteine intermediate" evidence="3 4">
    <location>
        <position position="129"/>
    </location>
</feature>
<sequence length="639" mass="71714">MNQVFFSKIRSLVSADRHRFKSKEMDLDLDLSYITDNILAMGFPGTGLEASWRNSIDDVCELLKQKHHGKYMIWNLSERVYDYSKLNNQILEFPFLDHHPPPLSLLFEIVNSLSNWLKADAENVAVVHCKGGKGRTGTIICCYLYYSCQFEIMDDAKNHFAEKRSKMKKGVTQPSQQRYINYFKEIVSGSHMVEEFVLTFRSIELGPLTKDQANSLSFEIFEHAKEPILNFASSSNSIQIVPINNDNSESNNNNNNNNNNNNNNNNQQQQLYKIIILIQKKVQNDVLIRVYRGDTGKGKGKMKKQIFHLIFNIAFVNLDQCLFGMNEFDHFKSSKKYDPNLQMECRFQNNCTGAPDHSFKIWNIMALQYQRTKSSLNNSITDIKSINEINSTNNNNILASSAPTPLTTTTTTTTTTTTTSLPSSEHSTPQILISSSDANLDLKNCNINCDSSSGGGSNSSRNSNSNSRGGSSNSSSNRSSTSSRSSITTDSIKPSCSSDSICNNSSICNNSCNNNNNNNNNNNNNNNNNNNNNNNNNNNKNSNNNNNESSSNSNDDSDSEASIRKRKNTLWSSGSSIKLKPSPNLSRLSLFNGHRQSFTKKINPNNNEENVDQKTLPILKKETNDPSESDIKNVEIIQD</sequence>
<gene>
    <name type="primary">cnrN</name>
    <name type="ORF">DDB_G0287969</name>
</gene>
<organism>
    <name type="scientific">Dictyostelium discoideum</name>
    <name type="common">Social amoeba</name>
    <dbReference type="NCBI Taxonomy" id="44689"/>
    <lineage>
        <taxon>Eukaryota</taxon>
        <taxon>Amoebozoa</taxon>
        <taxon>Evosea</taxon>
        <taxon>Eumycetozoa</taxon>
        <taxon>Dictyostelia</taxon>
        <taxon>Dictyosteliales</taxon>
        <taxon>Dictyosteliaceae</taxon>
        <taxon>Dictyostelium</taxon>
    </lineage>
</organism>
<dbReference type="EC" id="3.1.3.67"/>
<dbReference type="EMBL" id="AAFI02000107">
    <property type="protein sequence ID" value="EAL63410.1"/>
    <property type="molecule type" value="Genomic_DNA"/>
</dbReference>
<dbReference type="RefSeq" id="XP_636914.1">
    <property type="nucleotide sequence ID" value="XM_631822.1"/>
</dbReference>
<dbReference type="SMR" id="Q54JL7"/>
<dbReference type="FunCoup" id="Q54JL7">
    <property type="interactions" value="2"/>
</dbReference>
<dbReference type="STRING" id="44689.Q54JL7"/>
<dbReference type="PaxDb" id="44689-DDB0229881"/>
<dbReference type="EnsemblProtists" id="EAL63410">
    <property type="protein sequence ID" value="EAL63410"/>
    <property type="gene ID" value="DDB_G0287969"/>
</dbReference>
<dbReference type="GeneID" id="8626389"/>
<dbReference type="KEGG" id="ddi:DDB_G0287969"/>
<dbReference type="dictyBase" id="DDB_G0287969">
    <property type="gene designation" value="cnrN"/>
</dbReference>
<dbReference type="VEuPathDB" id="AmoebaDB:DDB_G0287969"/>
<dbReference type="eggNOG" id="KOG2283">
    <property type="taxonomic scope" value="Eukaryota"/>
</dbReference>
<dbReference type="HOGENOM" id="CLU_428608_0_0_1"/>
<dbReference type="InParanoid" id="Q54JL7"/>
<dbReference type="OMA" id="ICCYLYY"/>
<dbReference type="Reactome" id="R-DDI-1660499">
    <property type="pathway name" value="Synthesis of PIPs at the plasma membrane"/>
</dbReference>
<dbReference type="Reactome" id="R-DDI-1660514">
    <property type="pathway name" value="Synthesis of PIPs at the Golgi membrane"/>
</dbReference>
<dbReference type="Reactome" id="R-DDI-1855204">
    <property type="pathway name" value="Synthesis of IP3 and IP4 in the cytosol"/>
</dbReference>
<dbReference type="Reactome" id="R-DDI-199418">
    <property type="pathway name" value="Negative regulation of the PI3K/AKT network"/>
</dbReference>
<dbReference type="Reactome" id="R-DDI-202424">
    <property type="pathway name" value="Downstream TCR signaling"/>
</dbReference>
<dbReference type="Reactome" id="R-DDI-5689880">
    <property type="pathway name" value="Ub-specific processing proteases"/>
</dbReference>
<dbReference type="Reactome" id="R-DDI-5689896">
    <property type="pathway name" value="Ovarian tumor domain proteases"/>
</dbReference>
<dbReference type="Reactome" id="R-DDI-8948747">
    <property type="pathway name" value="Regulation of PTEN localization"/>
</dbReference>
<dbReference type="Reactome" id="R-DDI-8948751">
    <property type="pathway name" value="Regulation of PTEN stability and activity"/>
</dbReference>
<dbReference type="PRO" id="PR:Q54JL7"/>
<dbReference type="Proteomes" id="UP000002195">
    <property type="component" value="Chromosome 5"/>
</dbReference>
<dbReference type="GO" id="GO:0042995">
    <property type="term" value="C:cell projection"/>
    <property type="evidence" value="ECO:0000318"/>
    <property type="project" value="GO_Central"/>
</dbReference>
<dbReference type="GO" id="GO:0005737">
    <property type="term" value="C:cytoplasm"/>
    <property type="evidence" value="ECO:0000314"/>
    <property type="project" value="dictyBase"/>
</dbReference>
<dbReference type="GO" id="GO:0005829">
    <property type="term" value="C:cytosol"/>
    <property type="evidence" value="ECO:0000318"/>
    <property type="project" value="GO_Central"/>
</dbReference>
<dbReference type="GO" id="GO:0005634">
    <property type="term" value="C:nucleus"/>
    <property type="evidence" value="ECO:0000318"/>
    <property type="project" value="GO_Central"/>
</dbReference>
<dbReference type="GO" id="GO:0005886">
    <property type="term" value="C:plasma membrane"/>
    <property type="evidence" value="ECO:0000314"/>
    <property type="project" value="dictyBase"/>
</dbReference>
<dbReference type="GO" id="GO:0016791">
    <property type="term" value="F:phosphatase activity"/>
    <property type="evidence" value="ECO:0000314"/>
    <property type="project" value="dictyBase"/>
</dbReference>
<dbReference type="GO" id="GO:0016314">
    <property type="term" value="F:phosphatidylinositol-3,4,5-trisphosphate 3-phosphatase activity"/>
    <property type="evidence" value="ECO:0000318"/>
    <property type="project" value="GO_Central"/>
</dbReference>
<dbReference type="GO" id="GO:0004725">
    <property type="term" value="F:protein tyrosine phosphatase activity"/>
    <property type="evidence" value="ECO:0000318"/>
    <property type="project" value="GO_Central"/>
</dbReference>
<dbReference type="GO" id="GO:0031152">
    <property type="term" value="P:aggregation involved in sorocarp development"/>
    <property type="evidence" value="ECO:0000315"/>
    <property type="project" value="dictyBase"/>
</dbReference>
<dbReference type="GO" id="GO:0048870">
    <property type="term" value="P:cell motility"/>
    <property type="evidence" value="ECO:0000318"/>
    <property type="project" value="GO_Central"/>
</dbReference>
<dbReference type="GO" id="GO:0140986">
    <property type="term" value="P:G protein-coupled chemorepellent receptor signaling pathway"/>
    <property type="evidence" value="ECO:0000315"/>
    <property type="project" value="dictyBase"/>
</dbReference>
<dbReference type="GO" id="GO:0031038">
    <property type="term" value="P:myosin II filament organization"/>
    <property type="evidence" value="ECO:0000315"/>
    <property type="project" value="dictyBase"/>
</dbReference>
<dbReference type="GO" id="GO:0030835">
    <property type="term" value="P:negative regulation of actin filament depolymerization"/>
    <property type="evidence" value="ECO:0000315"/>
    <property type="project" value="dictyBase"/>
</dbReference>
<dbReference type="GO" id="GO:1903665">
    <property type="term" value="P:negative regulation of asexual reproduction"/>
    <property type="evidence" value="ECO:0000315"/>
    <property type="project" value="dictyBase"/>
</dbReference>
<dbReference type="GO" id="GO:0051898">
    <property type="term" value="P:negative regulation of phosphatidylinositol 3-kinase/protein kinase B signal transduction"/>
    <property type="evidence" value="ECO:0000315"/>
    <property type="project" value="dictyBase"/>
</dbReference>
<dbReference type="GO" id="GO:0046580">
    <property type="term" value="P:negative regulation of Ras protein signal transduction"/>
    <property type="evidence" value="ECO:0000315"/>
    <property type="project" value="dictyBase"/>
</dbReference>
<dbReference type="GO" id="GO:0043491">
    <property type="term" value="P:phosphatidylinositol 3-kinase/protein kinase B signal transduction"/>
    <property type="evidence" value="ECO:0000318"/>
    <property type="project" value="GO_Central"/>
</dbReference>
<dbReference type="GO" id="GO:0046856">
    <property type="term" value="P:phosphatidylinositol dephosphorylation"/>
    <property type="evidence" value="ECO:0000318"/>
    <property type="project" value="GO_Central"/>
</dbReference>
<dbReference type="GO" id="GO:0051491">
    <property type="term" value="P:positive regulation of filopodium assembly"/>
    <property type="evidence" value="ECO:0000315"/>
    <property type="project" value="dictyBase"/>
</dbReference>
<dbReference type="GO" id="GO:0051896">
    <property type="term" value="P:regulation of phosphatidylinositol 3-kinase/protein kinase B signal transduction"/>
    <property type="evidence" value="ECO:0000318"/>
    <property type="project" value="GO_Central"/>
</dbReference>
<dbReference type="GO" id="GO:0030587">
    <property type="term" value="P:sorocarp development"/>
    <property type="evidence" value="ECO:0000315"/>
    <property type="project" value="dictyBase"/>
</dbReference>
<dbReference type="GO" id="GO:0030435">
    <property type="term" value="P:sporulation resulting in formation of a cellular spore"/>
    <property type="evidence" value="ECO:0000315"/>
    <property type="project" value="dictyBase"/>
</dbReference>
<dbReference type="CDD" id="cd14497">
    <property type="entry name" value="PTP_PTEN-like"/>
    <property type="match status" value="1"/>
</dbReference>
<dbReference type="FunFam" id="3.90.190.10:FF:000029">
    <property type="entry name" value="Phosphatidylinositol 3,4,5-trisphosphate 3-phosphatase and dual-specificity protein phosphatase PTEN"/>
    <property type="match status" value="1"/>
</dbReference>
<dbReference type="Gene3D" id="2.60.40.1110">
    <property type="match status" value="1"/>
</dbReference>
<dbReference type="Gene3D" id="3.90.190.10">
    <property type="entry name" value="Protein tyrosine phosphatase superfamily"/>
    <property type="match status" value="1"/>
</dbReference>
<dbReference type="InterPro" id="IPR051281">
    <property type="entry name" value="Dual-spec_lipid-protein_phosph"/>
</dbReference>
<dbReference type="InterPro" id="IPR029021">
    <property type="entry name" value="Prot-tyrosine_phosphatase-like"/>
</dbReference>
<dbReference type="InterPro" id="IPR057023">
    <property type="entry name" value="PTP-SAK"/>
</dbReference>
<dbReference type="InterPro" id="IPR014020">
    <property type="entry name" value="Tensin_C2-dom"/>
</dbReference>
<dbReference type="InterPro" id="IPR029023">
    <property type="entry name" value="Tensin_phosphatase"/>
</dbReference>
<dbReference type="InterPro" id="IPR016130">
    <property type="entry name" value="Tyr_Pase_AS"/>
</dbReference>
<dbReference type="InterPro" id="IPR000387">
    <property type="entry name" value="Tyr_Pase_dom"/>
</dbReference>
<dbReference type="PANTHER" id="PTHR12305">
    <property type="entry name" value="PHOSPHATASE WITH HOMOLOGY TO TENSIN"/>
    <property type="match status" value="1"/>
</dbReference>
<dbReference type="PANTHER" id="PTHR12305:SF52">
    <property type="entry name" value="PHOSPHATIDYLINOSITOL 3,4,5-TRISPHOSPHATE 3-PHOSPHATASE CNRN"/>
    <property type="match status" value="1"/>
</dbReference>
<dbReference type="Pfam" id="PF10409">
    <property type="entry name" value="PTEN_C2"/>
    <property type="match status" value="1"/>
</dbReference>
<dbReference type="Pfam" id="PF22784">
    <property type="entry name" value="PTP-SAK"/>
    <property type="match status" value="1"/>
</dbReference>
<dbReference type="SMART" id="SM01326">
    <property type="entry name" value="PTEN_C2"/>
    <property type="match status" value="1"/>
</dbReference>
<dbReference type="SUPFAM" id="SSF52799">
    <property type="entry name" value="(Phosphotyrosine protein) phosphatases II"/>
    <property type="match status" value="1"/>
</dbReference>
<dbReference type="PROSITE" id="PS51182">
    <property type="entry name" value="C2_TENSIN"/>
    <property type="match status" value="1"/>
</dbReference>
<dbReference type="PROSITE" id="PS51181">
    <property type="entry name" value="PPASE_TENSIN"/>
    <property type="match status" value="1"/>
</dbReference>
<dbReference type="PROSITE" id="PS00383">
    <property type="entry name" value="TYR_PHOSPHATASE_1"/>
    <property type="match status" value="1"/>
</dbReference>
<reference key="1">
    <citation type="journal article" date="2005" name="Nature">
        <title>The genome of the social amoeba Dictyostelium discoideum.</title>
        <authorList>
            <person name="Eichinger L."/>
            <person name="Pachebat J.A."/>
            <person name="Gloeckner G."/>
            <person name="Rajandream M.A."/>
            <person name="Sucgang R."/>
            <person name="Berriman M."/>
            <person name="Song J."/>
            <person name="Olsen R."/>
            <person name="Szafranski K."/>
            <person name="Xu Q."/>
            <person name="Tunggal B."/>
            <person name="Kummerfeld S."/>
            <person name="Madera M."/>
            <person name="Konfortov B.A."/>
            <person name="Rivero F."/>
            <person name="Bankier A.T."/>
            <person name="Lehmann R."/>
            <person name="Hamlin N."/>
            <person name="Davies R."/>
            <person name="Gaudet P."/>
            <person name="Fey P."/>
            <person name="Pilcher K."/>
            <person name="Chen G."/>
            <person name="Saunders D."/>
            <person name="Sodergren E.J."/>
            <person name="Davis P."/>
            <person name="Kerhornou A."/>
            <person name="Nie X."/>
            <person name="Hall N."/>
            <person name="Anjard C."/>
            <person name="Hemphill L."/>
            <person name="Bason N."/>
            <person name="Farbrother P."/>
            <person name="Desany B."/>
            <person name="Just E."/>
            <person name="Morio T."/>
            <person name="Rost R."/>
            <person name="Churcher C.M."/>
            <person name="Cooper J."/>
            <person name="Haydock S."/>
            <person name="van Driessche N."/>
            <person name="Cronin A."/>
            <person name="Goodhead I."/>
            <person name="Muzny D.M."/>
            <person name="Mourier T."/>
            <person name="Pain A."/>
            <person name="Lu M."/>
            <person name="Harper D."/>
            <person name="Lindsay R."/>
            <person name="Hauser H."/>
            <person name="James K.D."/>
            <person name="Quiles M."/>
            <person name="Madan Babu M."/>
            <person name="Saito T."/>
            <person name="Buchrieser C."/>
            <person name="Wardroper A."/>
            <person name="Felder M."/>
            <person name="Thangavelu M."/>
            <person name="Johnson D."/>
            <person name="Knights A."/>
            <person name="Loulseged H."/>
            <person name="Mungall K.L."/>
            <person name="Oliver K."/>
            <person name="Price C."/>
            <person name="Quail M.A."/>
            <person name="Urushihara H."/>
            <person name="Hernandez J."/>
            <person name="Rabbinowitsch E."/>
            <person name="Steffen D."/>
            <person name="Sanders M."/>
            <person name="Ma J."/>
            <person name="Kohara Y."/>
            <person name="Sharp S."/>
            <person name="Simmonds M.N."/>
            <person name="Spiegler S."/>
            <person name="Tivey A."/>
            <person name="Sugano S."/>
            <person name="White B."/>
            <person name="Walker D."/>
            <person name="Woodward J.R."/>
            <person name="Winckler T."/>
            <person name="Tanaka Y."/>
            <person name="Shaulsky G."/>
            <person name="Schleicher M."/>
            <person name="Weinstock G.M."/>
            <person name="Rosenthal A."/>
            <person name="Cox E.C."/>
            <person name="Chisholm R.L."/>
            <person name="Gibbs R.A."/>
            <person name="Loomis W.F."/>
            <person name="Platzer M."/>
            <person name="Kay R.R."/>
            <person name="Williams J.G."/>
            <person name="Dear P.H."/>
            <person name="Noegel A.A."/>
            <person name="Barrell B.G."/>
            <person name="Kuspa A."/>
        </authorList>
    </citation>
    <scope>NUCLEOTIDE SEQUENCE [LARGE SCALE GENOMIC DNA]</scope>
    <source>
        <strain>AX4</strain>
    </source>
</reference>
<reference key="2">
    <citation type="journal article" date="2008" name="Eukaryot. Cell">
        <title>A protein with similarity to PTEN regulates aggregation territory size by decreasing cyclic AMP pulse size during Dictyostelium discoideum development.</title>
        <authorList>
            <person name="Tang Y."/>
            <person name="Gomer R.H."/>
        </authorList>
    </citation>
    <scope>FUNCTION</scope>
    <scope>CATALYTIC ACTIVITY</scope>
    <scope>DISRUPTION PHENOTYPE</scope>
    <scope>DEVELOPMENTAL STAGE</scope>
</reference>